<comment type="function">
    <text evidence="1">Catalyzes the synthesis of the hydroxymethylpyrimidine phosphate (HMP-P) moiety of thiamine from aminoimidazole ribotide (AIR) in a radical S-adenosyl-L-methionine (SAM)-dependent reaction.</text>
</comment>
<comment type="catalytic activity">
    <reaction evidence="1">
        <text>5-amino-1-(5-phospho-beta-D-ribosyl)imidazole + S-adenosyl-L-methionine = 4-amino-2-methyl-5-(phosphooxymethyl)pyrimidine + CO + 5'-deoxyadenosine + formate + L-methionine + 3 H(+)</text>
        <dbReference type="Rhea" id="RHEA:24840"/>
        <dbReference type="ChEBI" id="CHEBI:15378"/>
        <dbReference type="ChEBI" id="CHEBI:15740"/>
        <dbReference type="ChEBI" id="CHEBI:17245"/>
        <dbReference type="ChEBI" id="CHEBI:17319"/>
        <dbReference type="ChEBI" id="CHEBI:57844"/>
        <dbReference type="ChEBI" id="CHEBI:58354"/>
        <dbReference type="ChEBI" id="CHEBI:59789"/>
        <dbReference type="ChEBI" id="CHEBI:137981"/>
        <dbReference type="EC" id="4.1.99.17"/>
    </reaction>
</comment>
<comment type="cofactor">
    <cofactor evidence="1">
        <name>[4Fe-4S] cluster</name>
        <dbReference type="ChEBI" id="CHEBI:49883"/>
    </cofactor>
    <text evidence="1">Binds 1 [4Fe-4S] cluster per subunit. The cluster is coordinated with 3 cysteines and an exchangeable S-adenosyl-L-methionine.</text>
</comment>
<comment type="pathway">
    <text evidence="1">Cofactor biosynthesis; thiamine diphosphate biosynthesis.</text>
</comment>
<comment type="subunit">
    <text evidence="1">Homodimer.</text>
</comment>
<comment type="similarity">
    <text evidence="1">Belongs to the ThiC family.</text>
</comment>
<protein>
    <recommendedName>
        <fullName evidence="1">Phosphomethylpyrimidine synthase</fullName>
        <ecNumber evidence="1">4.1.99.17</ecNumber>
    </recommendedName>
    <alternativeName>
        <fullName evidence="1">Hydroxymethylpyrimidine phosphate synthase</fullName>
        <shortName evidence="1">HMP-P synthase</shortName>
        <shortName evidence="1">HMP-phosphate synthase</shortName>
        <shortName evidence="1">HMPP synthase</shortName>
    </alternativeName>
    <alternativeName>
        <fullName evidence="1">Thiamine biosynthesis protein ThiC</fullName>
    </alternativeName>
</protein>
<sequence>MILYNIFLVKMKVDFINTVFPSSTKEYIPGTIYNNIKVGMRKIHFNDNTESILVYDTGGLHTDQNVEVDINHGITKLRLNWIIDRQDVEYYERQPVLNSEHIFTSQSNKVLRANSTKPVTQIFYARNNIITPEMEYIAIRENSLRQKILSYKPTVMSPEITPEFVRQEVASGRAIIPANINHPESEPMIIGKNFLVKINANIGNSVVSSNIEEEVQKMIHAITYGADTVMDLSTGNNIHDIREWIIRNSPVPIGTVPIYQALNKVNGVVGDLNFNVFKETLIEQAEQGVDYFTIHAGVLKNYISHTDNRLTGIVSRGGAIMAHWCTIHNKENFLYTNFEEICDIMKRYDIAFSLGDGLRPGSIADANDTAQFLELKTLGELTDIAWQHDCQAMIEGPGHVPMHLIKENMEKQIHFCKEAPFYTLGPLTTDIAPGYDHITSAIGAAITGWYGTSMLCYVTPKEHLGLPNIQDVKDGVIAYKIAAHAADLAKGNPSAYIRDYALSYARFNFKWHDQFNLSLDPETARSLHDESLPSEHAKSAHFCSMCGPKFCSMKLTHHLKEHSTG</sequence>
<organism>
    <name type="scientific">Ehrlichia canis (strain Jake)</name>
    <dbReference type="NCBI Taxonomy" id="269484"/>
    <lineage>
        <taxon>Bacteria</taxon>
        <taxon>Pseudomonadati</taxon>
        <taxon>Pseudomonadota</taxon>
        <taxon>Alphaproteobacteria</taxon>
        <taxon>Rickettsiales</taxon>
        <taxon>Anaplasmataceae</taxon>
        <taxon>Ehrlichia</taxon>
    </lineage>
</organism>
<gene>
    <name evidence="1" type="primary">thiC</name>
    <name type="ordered locus">Ecaj_0278</name>
</gene>
<proteinExistence type="inferred from homology"/>
<feature type="chain" id="PRO_0000242258" description="Phosphomethylpyrimidine synthase">
    <location>
        <begin position="1"/>
        <end position="565"/>
    </location>
</feature>
<feature type="binding site" evidence="1">
    <location>
        <position position="201"/>
    </location>
    <ligand>
        <name>substrate</name>
    </ligand>
</feature>
<feature type="binding site" evidence="1">
    <location>
        <position position="230"/>
    </location>
    <ligand>
        <name>substrate</name>
    </ligand>
</feature>
<feature type="binding site" evidence="1">
    <location>
        <position position="259"/>
    </location>
    <ligand>
        <name>substrate</name>
    </ligand>
</feature>
<feature type="binding site" evidence="1">
    <location>
        <position position="295"/>
    </location>
    <ligand>
        <name>substrate</name>
    </ligand>
</feature>
<feature type="binding site" evidence="1">
    <location>
        <begin position="315"/>
        <end position="317"/>
    </location>
    <ligand>
        <name>substrate</name>
    </ligand>
</feature>
<feature type="binding site" evidence="1">
    <location>
        <begin position="356"/>
        <end position="359"/>
    </location>
    <ligand>
        <name>substrate</name>
    </ligand>
</feature>
<feature type="binding site" evidence="1">
    <location>
        <position position="395"/>
    </location>
    <ligand>
        <name>substrate</name>
    </ligand>
</feature>
<feature type="binding site" evidence="1">
    <location>
        <position position="399"/>
    </location>
    <ligand>
        <name>Zn(2+)</name>
        <dbReference type="ChEBI" id="CHEBI:29105"/>
    </ligand>
</feature>
<feature type="binding site" evidence="1">
    <location>
        <position position="422"/>
    </location>
    <ligand>
        <name>substrate</name>
    </ligand>
</feature>
<feature type="binding site" evidence="1">
    <location>
        <position position="463"/>
    </location>
    <ligand>
        <name>Zn(2+)</name>
        <dbReference type="ChEBI" id="CHEBI:29105"/>
    </ligand>
</feature>
<feature type="binding site" evidence="1">
    <location>
        <position position="543"/>
    </location>
    <ligand>
        <name>[4Fe-4S] cluster</name>
        <dbReference type="ChEBI" id="CHEBI:49883"/>
        <note>4Fe-4S-S-AdoMet</note>
    </ligand>
</feature>
<feature type="binding site" evidence="1">
    <location>
        <position position="546"/>
    </location>
    <ligand>
        <name>[4Fe-4S] cluster</name>
        <dbReference type="ChEBI" id="CHEBI:49883"/>
        <note>4Fe-4S-S-AdoMet</note>
    </ligand>
</feature>
<feature type="binding site" evidence="1">
    <location>
        <position position="551"/>
    </location>
    <ligand>
        <name>[4Fe-4S] cluster</name>
        <dbReference type="ChEBI" id="CHEBI:49883"/>
        <note>4Fe-4S-S-AdoMet</note>
    </ligand>
</feature>
<evidence type="ECO:0000255" key="1">
    <source>
        <dbReference type="HAMAP-Rule" id="MF_00089"/>
    </source>
</evidence>
<reference key="1">
    <citation type="journal article" date="2006" name="J. Bacteriol.">
        <title>The genome of the obligately intracellular bacterium Ehrlichia canis reveals themes of complex membrane structure and immune evasion strategies.</title>
        <authorList>
            <person name="Mavromatis K."/>
            <person name="Doyle C.K."/>
            <person name="Lykidis A."/>
            <person name="Ivanova N."/>
            <person name="Francino M.P."/>
            <person name="Chain P."/>
            <person name="Shin M."/>
            <person name="Malfatti S."/>
            <person name="Larimer F."/>
            <person name="Copeland A."/>
            <person name="Detter J.C."/>
            <person name="Land M."/>
            <person name="Richardson P.M."/>
            <person name="Yu X.J."/>
            <person name="Walker D.H."/>
            <person name="McBride J.W."/>
            <person name="Kyrpides N.C."/>
        </authorList>
    </citation>
    <scope>NUCLEOTIDE SEQUENCE [LARGE SCALE GENOMIC DNA]</scope>
    <source>
        <strain>Jake</strain>
    </source>
</reference>
<name>THIC_EHRCJ</name>
<accession>Q3YSI0</accession>
<keyword id="KW-0004">4Fe-4S</keyword>
<keyword id="KW-0408">Iron</keyword>
<keyword id="KW-0411">Iron-sulfur</keyword>
<keyword id="KW-0456">Lyase</keyword>
<keyword id="KW-0479">Metal-binding</keyword>
<keyword id="KW-0949">S-adenosyl-L-methionine</keyword>
<keyword id="KW-0784">Thiamine biosynthesis</keyword>
<keyword id="KW-0862">Zinc</keyword>
<dbReference type="EC" id="4.1.99.17" evidence="1"/>
<dbReference type="EMBL" id="CP000107">
    <property type="protein sequence ID" value="AAZ68325.1"/>
    <property type="molecule type" value="Genomic_DNA"/>
</dbReference>
<dbReference type="SMR" id="Q3YSI0"/>
<dbReference type="FunCoup" id="Q3YSI0">
    <property type="interactions" value="277"/>
</dbReference>
<dbReference type="STRING" id="269484.Ecaj_0278"/>
<dbReference type="KEGG" id="ecn:Ecaj_0278"/>
<dbReference type="eggNOG" id="COG0422">
    <property type="taxonomic scope" value="Bacteria"/>
</dbReference>
<dbReference type="HOGENOM" id="CLU_013181_2_1_5"/>
<dbReference type="InParanoid" id="Q3YSI0"/>
<dbReference type="UniPathway" id="UPA00060"/>
<dbReference type="Proteomes" id="UP000000435">
    <property type="component" value="Chromosome"/>
</dbReference>
<dbReference type="GO" id="GO:0005829">
    <property type="term" value="C:cytosol"/>
    <property type="evidence" value="ECO:0007669"/>
    <property type="project" value="TreeGrafter"/>
</dbReference>
<dbReference type="GO" id="GO:0051539">
    <property type="term" value="F:4 iron, 4 sulfur cluster binding"/>
    <property type="evidence" value="ECO:0007669"/>
    <property type="project" value="UniProtKB-KW"/>
</dbReference>
<dbReference type="GO" id="GO:0016830">
    <property type="term" value="F:carbon-carbon lyase activity"/>
    <property type="evidence" value="ECO:0007669"/>
    <property type="project" value="InterPro"/>
</dbReference>
<dbReference type="GO" id="GO:0008270">
    <property type="term" value="F:zinc ion binding"/>
    <property type="evidence" value="ECO:0007669"/>
    <property type="project" value="UniProtKB-UniRule"/>
</dbReference>
<dbReference type="GO" id="GO:0009228">
    <property type="term" value="P:thiamine biosynthetic process"/>
    <property type="evidence" value="ECO:0007669"/>
    <property type="project" value="UniProtKB-KW"/>
</dbReference>
<dbReference type="GO" id="GO:0009229">
    <property type="term" value="P:thiamine diphosphate biosynthetic process"/>
    <property type="evidence" value="ECO:0007669"/>
    <property type="project" value="UniProtKB-UniRule"/>
</dbReference>
<dbReference type="FunFam" id="3.20.20.540:FF:000001">
    <property type="entry name" value="Phosphomethylpyrimidine synthase"/>
    <property type="match status" value="1"/>
</dbReference>
<dbReference type="Gene3D" id="6.10.250.620">
    <property type="match status" value="1"/>
</dbReference>
<dbReference type="Gene3D" id="3.20.20.540">
    <property type="entry name" value="Radical SAM ThiC family, central domain"/>
    <property type="match status" value="1"/>
</dbReference>
<dbReference type="HAMAP" id="MF_00089">
    <property type="entry name" value="ThiC"/>
    <property type="match status" value="1"/>
</dbReference>
<dbReference type="InterPro" id="IPR037509">
    <property type="entry name" value="ThiC"/>
</dbReference>
<dbReference type="InterPro" id="IPR025747">
    <property type="entry name" value="ThiC-associated_dom"/>
</dbReference>
<dbReference type="InterPro" id="IPR038521">
    <property type="entry name" value="ThiC/Bza_core_dom"/>
</dbReference>
<dbReference type="InterPro" id="IPR002817">
    <property type="entry name" value="ThiC/BzaA/B"/>
</dbReference>
<dbReference type="NCBIfam" id="NF006763">
    <property type="entry name" value="PRK09284.1"/>
    <property type="match status" value="1"/>
</dbReference>
<dbReference type="NCBIfam" id="NF009895">
    <property type="entry name" value="PRK13352.1"/>
    <property type="match status" value="1"/>
</dbReference>
<dbReference type="NCBIfam" id="TIGR00190">
    <property type="entry name" value="thiC"/>
    <property type="match status" value="1"/>
</dbReference>
<dbReference type="PANTHER" id="PTHR30557:SF1">
    <property type="entry name" value="PHOSPHOMETHYLPYRIMIDINE SYNTHASE, CHLOROPLASTIC"/>
    <property type="match status" value="1"/>
</dbReference>
<dbReference type="PANTHER" id="PTHR30557">
    <property type="entry name" value="THIAMINE BIOSYNTHESIS PROTEIN THIC"/>
    <property type="match status" value="1"/>
</dbReference>
<dbReference type="Pfam" id="PF13667">
    <property type="entry name" value="ThiC-associated"/>
    <property type="match status" value="1"/>
</dbReference>
<dbReference type="Pfam" id="PF01964">
    <property type="entry name" value="ThiC_Rad_SAM"/>
    <property type="match status" value="1"/>
</dbReference>
<dbReference type="SFLD" id="SFLDF00407">
    <property type="entry name" value="phosphomethylpyrimidine_syntha"/>
    <property type="match status" value="1"/>
</dbReference>
<dbReference type="SFLD" id="SFLDG01114">
    <property type="entry name" value="phosphomethylpyrimidine_syntha"/>
    <property type="match status" value="1"/>
</dbReference>
<dbReference type="SFLD" id="SFLDS00113">
    <property type="entry name" value="Radical_SAM_Phosphomethylpyrim"/>
    <property type="match status" value="1"/>
</dbReference>